<reference key="1">
    <citation type="journal article" date="2009" name="BMC Genomics">
        <title>Metabolic analysis of the soil microbe Dechloromonas aromatica str. RCB: indications of a surprisingly complex life-style and cryptic anaerobic pathways for aromatic degradation.</title>
        <authorList>
            <person name="Salinero K.K."/>
            <person name="Keller K."/>
            <person name="Feil W.S."/>
            <person name="Feil H."/>
            <person name="Trong S."/>
            <person name="Di Bartolo G."/>
            <person name="Lapidus A."/>
        </authorList>
    </citation>
    <scope>NUCLEOTIDE SEQUENCE [LARGE SCALE GENOMIC DNA]</scope>
    <source>
        <strain>RCB</strain>
    </source>
</reference>
<gene>
    <name evidence="1" type="primary">azoR</name>
    <name type="ordered locus">Daro_1391</name>
</gene>
<comment type="function">
    <text evidence="1">Quinone reductase that provides resistance to thiol-specific stress caused by electrophilic quinones.</text>
</comment>
<comment type="function">
    <text evidence="1">Also exhibits azoreductase activity. Catalyzes the reductive cleavage of the azo bond in aromatic azo compounds to the corresponding amines.</text>
</comment>
<comment type="catalytic activity">
    <reaction evidence="1">
        <text>2 a quinone + NADH + H(+) = 2 a 1,4-benzosemiquinone + NAD(+)</text>
        <dbReference type="Rhea" id="RHEA:65952"/>
        <dbReference type="ChEBI" id="CHEBI:15378"/>
        <dbReference type="ChEBI" id="CHEBI:57540"/>
        <dbReference type="ChEBI" id="CHEBI:57945"/>
        <dbReference type="ChEBI" id="CHEBI:132124"/>
        <dbReference type="ChEBI" id="CHEBI:134225"/>
    </reaction>
</comment>
<comment type="catalytic activity">
    <reaction evidence="1">
        <text>N,N-dimethyl-1,4-phenylenediamine + anthranilate + 2 NAD(+) = 2-(4-dimethylaminophenyl)diazenylbenzoate + 2 NADH + 2 H(+)</text>
        <dbReference type="Rhea" id="RHEA:55872"/>
        <dbReference type="ChEBI" id="CHEBI:15378"/>
        <dbReference type="ChEBI" id="CHEBI:15783"/>
        <dbReference type="ChEBI" id="CHEBI:16567"/>
        <dbReference type="ChEBI" id="CHEBI:57540"/>
        <dbReference type="ChEBI" id="CHEBI:57945"/>
        <dbReference type="ChEBI" id="CHEBI:71579"/>
        <dbReference type="EC" id="1.7.1.17"/>
    </reaction>
</comment>
<comment type="cofactor">
    <cofactor evidence="1">
        <name>FMN</name>
        <dbReference type="ChEBI" id="CHEBI:58210"/>
    </cofactor>
    <text evidence="1">Binds 1 FMN per subunit.</text>
</comment>
<comment type="subunit">
    <text evidence="1">Homodimer.</text>
</comment>
<comment type="similarity">
    <text evidence="1">Belongs to the azoreductase type 1 family.</text>
</comment>
<feature type="chain" id="PRO_0000245914" description="FMN-dependent NADH:quinone oxidoreductase">
    <location>
        <begin position="1"/>
        <end position="199"/>
    </location>
</feature>
<feature type="binding site" evidence="1">
    <location>
        <position position="9"/>
    </location>
    <ligand>
        <name>FMN</name>
        <dbReference type="ChEBI" id="CHEBI:58210"/>
    </ligand>
</feature>
<feature type="binding site" evidence="1">
    <location>
        <begin position="95"/>
        <end position="98"/>
    </location>
    <ligand>
        <name>FMN</name>
        <dbReference type="ChEBI" id="CHEBI:58210"/>
    </ligand>
</feature>
<organism>
    <name type="scientific">Dechloromonas aromatica (strain RCB)</name>
    <dbReference type="NCBI Taxonomy" id="159087"/>
    <lineage>
        <taxon>Bacteria</taxon>
        <taxon>Pseudomonadati</taxon>
        <taxon>Pseudomonadota</taxon>
        <taxon>Betaproteobacteria</taxon>
        <taxon>Rhodocyclales</taxon>
        <taxon>Azonexaceae</taxon>
        <taxon>Dechloromonas</taxon>
    </lineage>
</organism>
<protein>
    <recommendedName>
        <fullName evidence="1">FMN-dependent NADH:quinone oxidoreductase</fullName>
        <ecNumber evidence="1">1.6.5.-</ecNumber>
    </recommendedName>
    <alternativeName>
        <fullName evidence="1">Azo-dye reductase</fullName>
    </alternativeName>
    <alternativeName>
        <fullName evidence="1">FMN-dependent NADH-azo compound oxidoreductase</fullName>
    </alternativeName>
    <alternativeName>
        <fullName evidence="1">FMN-dependent NADH-azoreductase</fullName>
        <ecNumber evidence="1">1.7.1.17</ecNumber>
    </alternativeName>
</protein>
<dbReference type="EC" id="1.6.5.-" evidence="1"/>
<dbReference type="EC" id="1.7.1.17" evidence="1"/>
<dbReference type="EMBL" id="CP000089">
    <property type="protein sequence ID" value="AAZ46140.1"/>
    <property type="molecule type" value="Genomic_DNA"/>
</dbReference>
<dbReference type="SMR" id="Q47G91"/>
<dbReference type="STRING" id="159087.Daro_1391"/>
<dbReference type="KEGG" id="dar:Daro_1391"/>
<dbReference type="eggNOG" id="COG1182">
    <property type="taxonomic scope" value="Bacteria"/>
</dbReference>
<dbReference type="HOGENOM" id="CLU_088964_0_0_4"/>
<dbReference type="OrthoDB" id="9787136at2"/>
<dbReference type="GO" id="GO:0009055">
    <property type="term" value="F:electron transfer activity"/>
    <property type="evidence" value="ECO:0007669"/>
    <property type="project" value="UniProtKB-UniRule"/>
</dbReference>
<dbReference type="GO" id="GO:0010181">
    <property type="term" value="F:FMN binding"/>
    <property type="evidence" value="ECO:0007669"/>
    <property type="project" value="UniProtKB-UniRule"/>
</dbReference>
<dbReference type="GO" id="GO:0016652">
    <property type="term" value="F:oxidoreductase activity, acting on NAD(P)H as acceptor"/>
    <property type="evidence" value="ECO:0007669"/>
    <property type="project" value="UniProtKB-UniRule"/>
</dbReference>
<dbReference type="GO" id="GO:0016655">
    <property type="term" value="F:oxidoreductase activity, acting on NAD(P)H, quinone or similar compound as acceptor"/>
    <property type="evidence" value="ECO:0007669"/>
    <property type="project" value="InterPro"/>
</dbReference>
<dbReference type="Gene3D" id="3.40.50.360">
    <property type="match status" value="1"/>
</dbReference>
<dbReference type="HAMAP" id="MF_01216">
    <property type="entry name" value="Azoreductase_type1"/>
    <property type="match status" value="1"/>
</dbReference>
<dbReference type="InterPro" id="IPR003680">
    <property type="entry name" value="Flavodoxin_fold"/>
</dbReference>
<dbReference type="InterPro" id="IPR029039">
    <property type="entry name" value="Flavoprotein-like_sf"/>
</dbReference>
<dbReference type="InterPro" id="IPR050104">
    <property type="entry name" value="FMN-dep_NADH:Q_OxRdtase_AzoR1"/>
</dbReference>
<dbReference type="InterPro" id="IPR023048">
    <property type="entry name" value="NADH:quinone_OxRdtase_FMN_depd"/>
</dbReference>
<dbReference type="PANTHER" id="PTHR43741">
    <property type="entry name" value="FMN-DEPENDENT NADH-AZOREDUCTASE 1"/>
    <property type="match status" value="1"/>
</dbReference>
<dbReference type="PANTHER" id="PTHR43741:SF2">
    <property type="entry name" value="FMN-DEPENDENT NADH:QUINONE OXIDOREDUCTASE"/>
    <property type="match status" value="1"/>
</dbReference>
<dbReference type="Pfam" id="PF02525">
    <property type="entry name" value="Flavodoxin_2"/>
    <property type="match status" value="1"/>
</dbReference>
<dbReference type="SUPFAM" id="SSF52218">
    <property type="entry name" value="Flavoproteins"/>
    <property type="match status" value="1"/>
</dbReference>
<evidence type="ECO:0000255" key="1">
    <source>
        <dbReference type="HAMAP-Rule" id="MF_01216"/>
    </source>
</evidence>
<keyword id="KW-0285">Flavoprotein</keyword>
<keyword id="KW-0288">FMN</keyword>
<keyword id="KW-0520">NAD</keyword>
<keyword id="KW-0560">Oxidoreductase</keyword>
<accession>Q47G91</accession>
<proteinExistence type="inferred from homology"/>
<sequence length="199" mass="21191">MKILQINASARSAGANSTRLADTVTARLLARNPNAVVELRDLASHPHPVLDEPALGALFTPADQRTAEQSARVALDDALIAQVQSVDAIVLGVPMYNFGVPVQLKTWIDAIARAGVTFHYTEKGPEGLLKGKKVYVALARGGLYRDTPADSQVPYLKSVLGFLGMTDVEFIYAEGLAMGAESASKAFAEAEAQIEELIA</sequence>
<name>AZOR_DECAR</name>